<protein>
    <recommendedName>
        <fullName>Pre-rRNA-processing protein PNO1</fullName>
    </recommendedName>
</protein>
<comment type="function">
    <text evidence="1">Required for small ribosomal subunit (SSU) synthesis. Has a role in the processing of early nucleolar and late cytoplasmic pre-RNA species (By similarity).</text>
</comment>
<comment type="subunit">
    <text evidence="1">Component of the small ribosomal subunit, ribosomal RNA processing complex (SSU RRP complex).</text>
</comment>
<comment type="subcellular location">
    <subcellularLocation>
        <location evidence="2">Cytoplasm</location>
    </subcellularLocation>
    <subcellularLocation>
        <location evidence="2">Nucleus</location>
        <location evidence="2">Nucleolus</location>
    </subcellularLocation>
</comment>
<comment type="similarity">
    <text evidence="4">Belongs to the PNO1 family.</text>
</comment>
<comment type="sequence caution" evidence="4">
    <conflict type="erroneous initiation">
        <sequence resource="EMBL-CDS" id="AAS53761"/>
    </conflict>
    <text>Extended N-terminus.</text>
</comment>
<organism>
    <name type="scientific">Eremothecium gossypii (strain ATCC 10895 / CBS 109.51 / FGSC 9923 / NRRL Y-1056)</name>
    <name type="common">Yeast</name>
    <name type="synonym">Ashbya gossypii</name>
    <dbReference type="NCBI Taxonomy" id="284811"/>
    <lineage>
        <taxon>Eukaryota</taxon>
        <taxon>Fungi</taxon>
        <taxon>Dikarya</taxon>
        <taxon>Ascomycota</taxon>
        <taxon>Saccharomycotina</taxon>
        <taxon>Saccharomycetes</taxon>
        <taxon>Saccharomycetales</taxon>
        <taxon>Saccharomycetaceae</taxon>
        <taxon>Eremothecium</taxon>
    </lineage>
</organism>
<feature type="chain" id="PRO_0000278362" description="Pre-rRNA-processing protein PNO1">
    <location>
        <begin position="1"/>
        <end position="267"/>
    </location>
</feature>
<feature type="domain" description="KH">
    <location>
        <begin position="188"/>
        <end position="240"/>
    </location>
</feature>
<feature type="region of interest" description="Disordered" evidence="3">
    <location>
        <begin position="1"/>
        <end position="35"/>
    </location>
</feature>
<feature type="region of interest" description="Disordered" evidence="3">
    <location>
        <begin position="43"/>
        <end position="62"/>
    </location>
</feature>
<feature type="compositionally biased region" description="Low complexity" evidence="3">
    <location>
        <begin position="48"/>
        <end position="62"/>
    </location>
</feature>
<sequence>MVAPTALKKSGTDGQTAPGPTGSRIVGTDNTRSIEDDDDILIDQEDSGAAAAEQAEGAREQQGVVLDAEGKPRFAAAASVAETRVKAESRKVPVPPHRMTPLRNSWTKIYPPLVDHLKLQVRMNLKTKSVELRTHPRHTTDPGALQKGADFIKAFTLGFDLDDSISLLRLDDLYIETFEIKDVKTLHGDHLSRAIGRIAGKDGKTKFAIENATRTRIVLADSKIHILGGFTHIRMAREAVVSLILGSPPGKVYGNLRTVASRLKERY</sequence>
<evidence type="ECO:0000250" key="1"/>
<evidence type="ECO:0000250" key="2">
    <source>
        <dbReference type="UniProtKB" id="Q99216"/>
    </source>
</evidence>
<evidence type="ECO:0000256" key="3">
    <source>
        <dbReference type="SAM" id="MobiDB-lite"/>
    </source>
</evidence>
<evidence type="ECO:0000305" key="4"/>
<proteinExistence type="inferred from homology"/>
<accession>Q753C6</accession>
<reference key="1">
    <citation type="journal article" date="2004" name="Science">
        <title>The Ashbya gossypii genome as a tool for mapping the ancient Saccharomyces cerevisiae genome.</title>
        <authorList>
            <person name="Dietrich F.S."/>
            <person name="Voegeli S."/>
            <person name="Brachat S."/>
            <person name="Lerch A."/>
            <person name="Gates K."/>
            <person name="Steiner S."/>
            <person name="Mohr C."/>
            <person name="Poehlmann R."/>
            <person name="Luedi P."/>
            <person name="Choi S."/>
            <person name="Wing R.A."/>
            <person name="Flavier A."/>
            <person name="Gaffney T.D."/>
            <person name="Philippsen P."/>
        </authorList>
    </citation>
    <scope>NUCLEOTIDE SEQUENCE [LARGE SCALE GENOMIC DNA]</scope>
    <source>
        <strain>ATCC 10895 / CBS 109.51 / FGSC 9923 / NRRL Y-1056</strain>
    </source>
</reference>
<reference key="2">
    <citation type="journal article" date="2013" name="G3 (Bethesda)">
        <title>Genomes of Ashbya fungi isolated from insects reveal four mating-type loci, numerous translocations, lack of transposons, and distinct gene duplications.</title>
        <authorList>
            <person name="Dietrich F.S."/>
            <person name="Voegeli S."/>
            <person name="Kuo S."/>
            <person name="Philippsen P."/>
        </authorList>
    </citation>
    <scope>GENOME REANNOTATION</scope>
    <scope>SEQUENCE REVISION TO 205</scope>
    <source>
        <strain>ATCC 10895 / CBS 109.51 / FGSC 9923 / NRRL Y-1056</strain>
    </source>
</reference>
<dbReference type="EMBL" id="AE016819">
    <property type="protein sequence ID" value="AAS53761.2"/>
    <property type="status" value="ALT_INIT"/>
    <property type="molecule type" value="Genomic_DNA"/>
</dbReference>
<dbReference type="RefSeq" id="NP_985937.2">
    <property type="nucleotide sequence ID" value="NM_211292.2"/>
</dbReference>
<dbReference type="SMR" id="Q753C6"/>
<dbReference type="FunCoup" id="Q753C6">
    <property type="interactions" value="989"/>
</dbReference>
<dbReference type="STRING" id="284811.Q753C6"/>
<dbReference type="GeneID" id="4622209"/>
<dbReference type="KEGG" id="ago:AGOS_AFR390C"/>
<dbReference type="eggNOG" id="KOG3273">
    <property type="taxonomic scope" value="Eukaryota"/>
</dbReference>
<dbReference type="InParanoid" id="Q753C6"/>
<dbReference type="OrthoDB" id="1932641at2759"/>
<dbReference type="Proteomes" id="UP000000591">
    <property type="component" value="Chromosome VI"/>
</dbReference>
<dbReference type="GO" id="GO:0005737">
    <property type="term" value="C:cytoplasm"/>
    <property type="evidence" value="ECO:0007669"/>
    <property type="project" value="UniProtKB-SubCell"/>
</dbReference>
<dbReference type="GO" id="GO:0005730">
    <property type="term" value="C:nucleolus"/>
    <property type="evidence" value="ECO:0007669"/>
    <property type="project" value="UniProtKB-SubCell"/>
</dbReference>
<dbReference type="GO" id="GO:0005634">
    <property type="term" value="C:nucleus"/>
    <property type="evidence" value="ECO:0000318"/>
    <property type="project" value="GO_Central"/>
</dbReference>
<dbReference type="GO" id="GO:0003723">
    <property type="term" value="F:RNA binding"/>
    <property type="evidence" value="ECO:0007669"/>
    <property type="project" value="UniProtKB-KW"/>
</dbReference>
<dbReference type="GO" id="GO:0042254">
    <property type="term" value="P:ribosome biogenesis"/>
    <property type="evidence" value="ECO:0007669"/>
    <property type="project" value="UniProtKB-KW"/>
</dbReference>
<dbReference type="CDD" id="cd22391">
    <property type="entry name" value="KH-I_PNO1_rpt1"/>
    <property type="match status" value="1"/>
</dbReference>
<dbReference type="CDD" id="cd22392">
    <property type="entry name" value="KH-I_PNO1_rpt2"/>
    <property type="match status" value="1"/>
</dbReference>
<dbReference type="FunFam" id="3.30.1370.10:FF:000009">
    <property type="entry name" value="RNA-binding protein PNO1"/>
    <property type="match status" value="1"/>
</dbReference>
<dbReference type="Gene3D" id="3.30.1370.10">
    <property type="entry name" value="K Homology domain, type 1"/>
    <property type="match status" value="1"/>
</dbReference>
<dbReference type="InterPro" id="IPR055212">
    <property type="entry name" value="KH-I_PNO1_first"/>
</dbReference>
<dbReference type="InterPro" id="IPR004087">
    <property type="entry name" value="KH_dom"/>
</dbReference>
<dbReference type="InterPro" id="IPR036612">
    <property type="entry name" value="KH_dom_type_1_sf"/>
</dbReference>
<dbReference type="InterPro" id="IPR055211">
    <property type="entry name" value="KH_PNO1_2nd"/>
</dbReference>
<dbReference type="PANTHER" id="PTHR12826">
    <property type="entry name" value="RIBONUCLEASE Y"/>
    <property type="match status" value="1"/>
</dbReference>
<dbReference type="PANTHER" id="PTHR12826:SF13">
    <property type="entry name" value="RNA-BINDING PROTEIN PNO1"/>
    <property type="match status" value="1"/>
</dbReference>
<dbReference type="Pfam" id="PF22891">
    <property type="entry name" value="KH_PNO1_2nd"/>
    <property type="match status" value="1"/>
</dbReference>
<dbReference type="SMART" id="SM00322">
    <property type="entry name" value="KH"/>
    <property type="match status" value="1"/>
</dbReference>
<dbReference type="SUPFAM" id="SSF54791">
    <property type="entry name" value="Eukaryotic type KH-domain (KH-domain type I)"/>
    <property type="match status" value="1"/>
</dbReference>
<keyword id="KW-0963">Cytoplasm</keyword>
<keyword id="KW-0539">Nucleus</keyword>
<keyword id="KW-1185">Reference proteome</keyword>
<keyword id="KW-0690">Ribosome biogenesis</keyword>
<keyword id="KW-0694">RNA-binding</keyword>
<gene>
    <name type="primary">PNO1</name>
    <name type="ordered locus">AFR390C</name>
</gene>
<name>PNO1_EREGS</name>